<reference key="1">
    <citation type="submission" date="1999-03" db="EMBL/GenBank/DDBJ databases">
        <authorList>
            <person name="Levin M.L."/>
            <person name="Herman G.E."/>
        </authorList>
    </citation>
    <scope>NUCLEOTIDE SEQUENCE [MRNA]</scope>
    <source>
        <tissue>Heart</tissue>
    </source>
</reference>
<reference key="2">
    <citation type="journal article" date="2000" name="Genome Res.">
        <title>Comparative genome sequence analysis of the Bpa/Str region in mouse and man.</title>
        <authorList>
            <person name="Mallon A.-M."/>
            <person name="Platzer M."/>
            <person name="Bate R."/>
            <person name="Gloeckner G."/>
            <person name="Botcherby M.R.M."/>
            <person name="Nordsiek G."/>
            <person name="Strivens M.A."/>
            <person name="Kioschis P."/>
            <person name="Dangel A."/>
            <person name="Cunningham D."/>
            <person name="Straw R.N.A."/>
            <person name="Weston P."/>
            <person name="Gilbert M."/>
            <person name="Fernando S."/>
            <person name="Goodall K."/>
            <person name="Hunter G."/>
            <person name="Greystrong J.S."/>
            <person name="Clarke D."/>
            <person name="Kimberley C."/>
            <person name="Goerdes M."/>
            <person name="Blechschmidt K."/>
            <person name="Rump A."/>
            <person name="Hinzmann B."/>
            <person name="Mundy C.R."/>
            <person name="Miller W."/>
            <person name="Poustka A."/>
            <person name="Herman G.E."/>
            <person name="Rhodes M."/>
            <person name="Denny P."/>
            <person name="Rosenthal A."/>
            <person name="Brown S.D.M."/>
        </authorList>
    </citation>
    <scope>NUCLEOTIDE SEQUENCE [LARGE SCALE GENOMIC DNA]</scope>
</reference>
<reference key="3">
    <citation type="journal article" date="2004" name="Nature">
        <title>The DNA sequence and comparative analysis of human chromosome 10.</title>
        <authorList>
            <person name="Deloukas P."/>
            <person name="Earthrowl M.E."/>
            <person name="Grafham D.V."/>
            <person name="Rubenfield M."/>
            <person name="French L."/>
            <person name="Steward C.A."/>
            <person name="Sims S.K."/>
            <person name="Jones M.C."/>
            <person name="Searle S."/>
            <person name="Scott C."/>
            <person name="Howe K."/>
            <person name="Hunt S.E."/>
            <person name="Andrews T.D."/>
            <person name="Gilbert J.G.R."/>
            <person name="Swarbreck D."/>
            <person name="Ashurst J.L."/>
            <person name="Taylor A."/>
            <person name="Battles J."/>
            <person name="Bird C.P."/>
            <person name="Ainscough R."/>
            <person name="Almeida J.P."/>
            <person name="Ashwell R.I.S."/>
            <person name="Ambrose K.D."/>
            <person name="Babbage A.K."/>
            <person name="Bagguley C.L."/>
            <person name="Bailey J."/>
            <person name="Banerjee R."/>
            <person name="Bates K."/>
            <person name="Beasley H."/>
            <person name="Bray-Allen S."/>
            <person name="Brown A.J."/>
            <person name="Brown J.Y."/>
            <person name="Burford D.C."/>
            <person name="Burrill W."/>
            <person name="Burton J."/>
            <person name="Cahill P."/>
            <person name="Camire D."/>
            <person name="Carter N.P."/>
            <person name="Chapman J.C."/>
            <person name="Clark S.Y."/>
            <person name="Clarke G."/>
            <person name="Clee C.M."/>
            <person name="Clegg S."/>
            <person name="Corby N."/>
            <person name="Coulson A."/>
            <person name="Dhami P."/>
            <person name="Dutta I."/>
            <person name="Dunn M."/>
            <person name="Faulkner L."/>
            <person name="Frankish A."/>
            <person name="Frankland J.A."/>
            <person name="Garner P."/>
            <person name="Garnett J."/>
            <person name="Gribble S."/>
            <person name="Griffiths C."/>
            <person name="Grocock R."/>
            <person name="Gustafson E."/>
            <person name="Hammond S."/>
            <person name="Harley J.L."/>
            <person name="Hart E."/>
            <person name="Heath P.D."/>
            <person name="Ho T.P."/>
            <person name="Hopkins B."/>
            <person name="Horne J."/>
            <person name="Howden P.J."/>
            <person name="Huckle E."/>
            <person name="Hynds C."/>
            <person name="Johnson C."/>
            <person name="Johnson D."/>
            <person name="Kana A."/>
            <person name="Kay M."/>
            <person name="Kimberley A.M."/>
            <person name="Kershaw J.K."/>
            <person name="Kokkinaki M."/>
            <person name="Laird G.K."/>
            <person name="Lawlor S."/>
            <person name="Lee H.M."/>
            <person name="Leongamornlert D.A."/>
            <person name="Laird G."/>
            <person name="Lloyd C."/>
            <person name="Lloyd D.M."/>
            <person name="Loveland J."/>
            <person name="Lovell J."/>
            <person name="McLaren S."/>
            <person name="McLay K.E."/>
            <person name="McMurray A."/>
            <person name="Mashreghi-Mohammadi M."/>
            <person name="Matthews L."/>
            <person name="Milne S."/>
            <person name="Nickerson T."/>
            <person name="Nguyen M."/>
            <person name="Overton-Larty E."/>
            <person name="Palmer S.A."/>
            <person name="Pearce A.V."/>
            <person name="Peck A.I."/>
            <person name="Pelan S."/>
            <person name="Phillimore B."/>
            <person name="Porter K."/>
            <person name="Rice C.M."/>
            <person name="Rogosin A."/>
            <person name="Ross M.T."/>
            <person name="Sarafidou T."/>
            <person name="Sehra H.K."/>
            <person name="Shownkeen R."/>
            <person name="Skuce C.D."/>
            <person name="Smith M."/>
            <person name="Standring L."/>
            <person name="Sycamore N."/>
            <person name="Tester J."/>
            <person name="Thorpe A."/>
            <person name="Torcasso W."/>
            <person name="Tracey A."/>
            <person name="Tromans A."/>
            <person name="Tsolas J."/>
            <person name="Wall M."/>
            <person name="Walsh J."/>
            <person name="Wang H."/>
            <person name="Weinstock K."/>
            <person name="West A.P."/>
            <person name="Willey D.L."/>
            <person name="Whitehead S.L."/>
            <person name="Wilming L."/>
            <person name="Wray P.W."/>
            <person name="Young L."/>
            <person name="Chen Y."/>
            <person name="Lovering R.C."/>
            <person name="Moschonas N.K."/>
            <person name="Siebert R."/>
            <person name="Fechtel K."/>
            <person name="Bentley D."/>
            <person name="Durbin R.M."/>
            <person name="Hubbard T."/>
            <person name="Doucette-Stamm L."/>
            <person name="Beck S."/>
            <person name="Smith D.R."/>
            <person name="Rogers J."/>
        </authorList>
    </citation>
    <scope>NUCLEOTIDE SEQUENCE [LARGE SCALE GENOMIC DNA]</scope>
</reference>
<reference key="4">
    <citation type="journal article" date="2005" name="Nature">
        <title>The DNA sequence of the human X chromosome.</title>
        <authorList>
            <person name="Ross M.T."/>
            <person name="Grafham D.V."/>
            <person name="Coffey A.J."/>
            <person name="Scherer S."/>
            <person name="McLay K."/>
            <person name="Muzny D."/>
            <person name="Platzer M."/>
            <person name="Howell G.R."/>
            <person name="Burrows C."/>
            <person name="Bird C.P."/>
            <person name="Frankish A."/>
            <person name="Lovell F.L."/>
            <person name="Howe K.L."/>
            <person name="Ashurst J.L."/>
            <person name="Fulton R.S."/>
            <person name="Sudbrak R."/>
            <person name="Wen G."/>
            <person name="Jones M.C."/>
            <person name="Hurles M.E."/>
            <person name="Andrews T.D."/>
            <person name="Scott C.E."/>
            <person name="Searle S."/>
            <person name="Ramser J."/>
            <person name="Whittaker A."/>
            <person name="Deadman R."/>
            <person name="Carter N.P."/>
            <person name="Hunt S.E."/>
            <person name="Chen R."/>
            <person name="Cree A."/>
            <person name="Gunaratne P."/>
            <person name="Havlak P."/>
            <person name="Hodgson A."/>
            <person name="Metzker M.L."/>
            <person name="Richards S."/>
            <person name="Scott G."/>
            <person name="Steffen D."/>
            <person name="Sodergren E."/>
            <person name="Wheeler D.A."/>
            <person name="Worley K.C."/>
            <person name="Ainscough R."/>
            <person name="Ambrose K.D."/>
            <person name="Ansari-Lari M.A."/>
            <person name="Aradhya S."/>
            <person name="Ashwell R.I."/>
            <person name="Babbage A.K."/>
            <person name="Bagguley C.L."/>
            <person name="Ballabio A."/>
            <person name="Banerjee R."/>
            <person name="Barker G.E."/>
            <person name="Barlow K.F."/>
            <person name="Barrett I.P."/>
            <person name="Bates K.N."/>
            <person name="Beare D.M."/>
            <person name="Beasley H."/>
            <person name="Beasley O."/>
            <person name="Beck A."/>
            <person name="Bethel G."/>
            <person name="Blechschmidt K."/>
            <person name="Brady N."/>
            <person name="Bray-Allen S."/>
            <person name="Bridgeman A.M."/>
            <person name="Brown A.J."/>
            <person name="Brown M.J."/>
            <person name="Bonnin D."/>
            <person name="Bruford E.A."/>
            <person name="Buhay C."/>
            <person name="Burch P."/>
            <person name="Burford D."/>
            <person name="Burgess J."/>
            <person name="Burrill W."/>
            <person name="Burton J."/>
            <person name="Bye J.M."/>
            <person name="Carder C."/>
            <person name="Carrel L."/>
            <person name="Chako J."/>
            <person name="Chapman J.C."/>
            <person name="Chavez D."/>
            <person name="Chen E."/>
            <person name="Chen G."/>
            <person name="Chen Y."/>
            <person name="Chen Z."/>
            <person name="Chinault C."/>
            <person name="Ciccodicola A."/>
            <person name="Clark S.Y."/>
            <person name="Clarke G."/>
            <person name="Clee C.M."/>
            <person name="Clegg S."/>
            <person name="Clerc-Blankenburg K."/>
            <person name="Clifford K."/>
            <person name="Cobley V."/>
            <person name="Cole C.G."/>
            <person name="Conquer J.S."/>
            <person name="Corby N."/>
            <person name="Connor R.E."/>
            <person name="David R."/>
            <person name="Davies J."/>
            <person name="Davis C."/>
            <person name="Davis J."/>
            <person name="Delgado O."/>
            <person name="Deshazo D."/>
            <person name="Dhami P."/>
            <person name="Ding Y."/>
            <person name="Dinh H."/>
            <person name="Dodsworth S."/>
            <person name="Draper H."/>
            <person name="Dugan-Rocha S."/>
            <person name="Dunham A."/>
            <person name="Dunn M."/>
            <person name="Durbin K.J."/>
            <person name="Dutta I."/>
            <person name="Eades T."/>
            <person name="Ellwood M."/>
            <person name="Emery-Cohen A."/>
            <person name="Errington H."/>
            <person name="Evans K.L."/>
            <person name="Faulkner L."/>
            <person name="Francis F."/>
            <person name="Frankland J."/>
            <person name="Fraser A.E."/>
            <person name="Galgoczy P."/>
            <person name="Gilbert J."/>
            <person name="Gill R."/>
            <person name="Gloeckner G."/>
            <person name="Gregory S.G."/>
            <person name="Gribble S."/>
            <person name="Griffiths C."/>
            <person name="Grocock R."/>
            <person name="Gu Y."/>
            <person name="Gwilliam R."/>
            <person name="Hamilton C."/>
            <person name="Hart E.A."/>
            <person name="Hawes A."/>
            <person name="Heath P.D."/>
            <person name="Heitmann K."/>
            <person name="Hennig S."/>
            <person name="Hernandez J."/>
            <person name="Hinzmann B."/>
            <person name="Ho S."/>
            <person name="Hoffs M."/>
            <person name="Howden P.J."/>
            <person name="Huckle E.J."/>
            <person name="Hume J."/>
            <person name="Hunt P.J."/>
            <person name="Hunt A.R."/>
            <person name="Isherwood J."/>
            <person name="Jacob L."/>
            <person name="Johnson D."/>
            <person name="Jones S."/>
            <person name="de Jong P.J."/>
            <person name="Joseph S.S."/>
            <person name="Keenan S."/>
            <person name="Kelly S."/>
            <person name="Kershaw J.K."/>
            <person name="Khan Z."/>
            <person name="Kioschis P."/>
            <person name="Klages S."/>
            <person name="Knights A.J."/>
            <person name="Kosiura A."/>
            <person name="Kovar-Smith C."/>
            <person name="Laird G.K."/>
            <person name="Langford C."/>
            <person name="Lawlor S."/>
            <person name="Leversha M."/>
            <person name="Lewis L."/>
            <person name="Liu W."/>
            <person name="Lloyd C."/>
            <person name="Lloyd D.M."/>
            <person name="Loulseged H."/>
            <person name="Loveland J.E."/>
            <person name="Lovell J.D."/>
            <person name="Lozado R."/>
            <person name="Lu J."/>
            <person name="Lyne R."/>
            <person name="Ma J."/>
            <person name="Maheshwari M."/>
            <person name="Matthews L.H."/>
            <person name="McDowall J."/>
            <person name="McLaren S."/>
            <person name="McMurray A."/>
            <person name="Meidl P."/>
            <person name="Meitinger T."/>
            <person name="Milne S."/>
            <person name="Miner G."/>
            <person name="Mistry S.L."/>
            <person name="Morgan M."/>
            <person name="Morris S."/>
            <person name="Mueller I."/>
            <person name="Mullikin J.C."/>
            <person name="Nguyen N."/>
            <person name="Nordsiek G."/>
            <person name="Nyakatura G."/>
            <person name="O'dell C.N."/>
            <person name="Okwuonu G."/>
            <person name="Palmer S."/>
            <person name="Pandian R."/>
            <person name="Parker D."/>
            <person name="Parrish J."/>
            <person name="Pasternak S."/>
            <person name="Patel D."/>
            <person name="Pearce A.V."/>
            <person name="Pearson D.M."/>
            <person name="Pelan S.E."/>
            <person name="Perez L."/>
            <person name="Porter K.M."/>
            <person name="Ramsey Y."/>
            <person name="Reichwald K."/>
            <person name="Rhodes S."/>
            <person name="Ridler K.A."/>
            <person name="Schlessinger D."/>
            <person name="Schueler M.G."/>
            <person name="Sehra H.K."/>
            <person name="Shaw-Smith C."/>
            <person name="Shen H."/>
            <person name="Sheridan E.M."/>
            <person name="Shownkeen R."/>
            <person name="Skuce C.D."/>
            <person name="Smith M.L."/>
            <person name="Sotheran E.C."/>
            <person name="Steingruber H.E."/>
            <person name="Steward C.A."/>
            <person name="Storey R."/>
            <person name="Swann R.M."/>
            <person name="Swarbreck D."/>
            <person name="Tabor P.E."/>
            <person name="Taudien S."/>
            <person name="Taylor T."/>
            <person name="Teague B."/>
            <person name="Thomas K."/>
            <person name="Thorpe A."/>
            <person name="Timms K."/>
            <person name="Tracey A."/>
            <person name="Trevanion S."/>
            <person name="Tromans A.C."/>
            <person name="d'Urso M."/>
            <person name="Verduzco D."/>
            <person name="Villasana D."/>
            <person name="Waldron L."/>
            <person name="Wall M."/>
            <person name="Wang Q."/>
            <person name="Warren J."/>
            <person name="Warry G.L."/>
            <person name="Wei X."/>
            <person name="West A."/>
            <person name="Whitehead S.L."/>
            <person name="Whiteley M.N."/>
            <person name="Wilkinson J.E."/>
            <person name="Willey D.L."/>
            <person name="Williams G."/>
            <person name="Williams L."/>
            <person name="Williamson A."/>
            <person name="Williamson H."/>
            <person name="Wilming L."/>
            <person name="Woodmansey R.L."/>
            <person name="Wray P.W."/>
            <person name="Yen J."/>
            <person name="Zhang J."/>
            <person name="Zhou J."/>
            <person name="Zoghbi H."/>
            <person name="Zorilla S."/>
            <person name="Buck D."/>
            <person name="Reinhardt R."/>
            <person name="Poustka A."/>
            <person name="Rosenthal A."/>
            <person name="Lehrach H."/>
            <person name="Meindl A."/>
            <person name="Minx P.J."/>
            <person name="Hillier L.W."/>
            <person name="Willard H.F."/>
            <person name="Wilson R.K."/>
            <person name="Waterston R.H."/>
            <person name="Rice C.M."/>
            <person name="Vaudin M."/>
            <person name="Coulson A."/>
            <person name="Nelson D.L."/>
            <person name="Weinstock G."/>
            <person name="Sulston J.E."/>
            <person name="Durbin R.M."/>
            <person name="Hubbard T."/>
            <person name="Gibbs R.A."/>
            <person name="Beck S."/>
            <person name="Rogers J."/>
            <person name="Bentley D.R."/>
        </authorList>
    </citation>
    <scope>NUCLEOTIDE SEQUENCE [LARGE SCALE GENOMIC DNA]</scope>
</reference>
<reference key="5">
    <citation type="submission" date="2005-09" db="EMBL/GenBank/DDBJ databases">
        <authorList>
            <person name="Mural R.J."/>
            <person name="Istrail S."/>
            <person name="Sutton G.G."/>
            <person name="Florea L."/>
            <person name="Halpern A.L."/>
            <person name="Mobarry C.M."/>
            <person name="Lippert R."/>
            <person name="Walenz B."/>
            <person name="Shatkay H."/>
            <person name="Dew I."/>
            <person name="Miller J.R."/>
            <person name="Flanigan M.J."/>
            <person name="Edwards N.J."/>
            <person name="Bolanos R."/>
            <person name="Fasulo D."/>
            <person name="Halldorsson B.V."/>
            <person name="Hannenhalli S."/>
            <person name="Turner R."/>
            <person name="Yooseph S."/>
            <person name="Lu F."/>
            <person name="Nusskern D.R."/>
            <person name="Shue B.C."/>
            <person name="Zheng X.H."/>
            <person name="Zhong F."/>
            <person name="Delcher A.L."/>
            <person name="Huson D.H."/>
            <person name="Kravitz S.A."/>
            <person name="Mouchard L."/>
            <person name="Reinert K."/>
            <person name="Remington K.A."/>
            <person name="Clark A.G."/>
            <person name="Waterman M.S."/>
            <person name="Eichler E.E."/>
            <person name="Adams M.D."/>
            <person name="Hunkapiller M.W."/>
            <person name="Myers E.W."/>
            <person name="Venter J.C."/>
        </authorList>
    </citation>
    <scope>NUCLEOTIDE SEQUENCE [LARGE SCALE GENOMIC DNA]</scope>
</reference>
<reference key="6">
    <citation type="journal article" date="2004" name="Genome Res.">
        <title>The status, quality, and expansion of the NIH full-length cDNA project: the Mammalian Gene Collection (MGC).</title>
        <authorList>
            <consortium name="The MGC Project Team"/>
        </authorList>
    </citation>
    <scope>NUCLEOTIDE SEQUENCE [LARGE SCALE MRNA]</scope>
    <source>
        <tissue>Eye</tissue>
    </source>
</reference>
<reference key="7">
    <citation type="journal article" date="1996" name="Genome Res.">
        <title>A comparative transcription map of the murine bare patches (Bpa) and striated (Str) critical regions and human Xq28.</title>
        <authorList>
            <person name="Levin M.L."/>
            <person name="Chatterjee A."/>
            <person name="Pragliola A."/>
            <person name="Worley K.C."/>
            <person name="Wehnert M."/>
            <person name="Zhuchenko O."/>
            <person name="Smith R.F."/>
            <person name="Lee C.C."/>
            <person name="Herman G.E."/>
        </authorList>
    </citation>
    <scope>PRELIMINARY NUCLEOTIDE SEQUENCE [MRNA] OF 224-373</scope>
    <source>
        <tissue>Heart</tissue>
    </source>
</reference>
<reference key="8">
    <citation type="journal article" date="2011" name="BMC Syst. Biol.">
        <title>Initial characterization of the human central proteome.</title>
        <authorList>
            <person name="Burkard T.R."/>
            <person name="Planyavsky M."/>
            <person name="Kaupe I."/>
            <person name="Breitwieser F.P."/>
            <person name="Buerckstuemmer T."/>
            <person name="Bennett K.L."/>
            <person name="Superti-Furga G."/>
            <person name="Colinge J."/>
        </authorList>
    </citation>
    <scope>IDENTIFICATION BY MASS SPECTROMETRY [LARGE SCALE ANALYSIS]</scope>
</reference>
<reference key="9">
    <citation type="journal article" date="2012" name="Mol. Cell. Proteomics">
        <title>Comparative large-scale characterisation of plant vs. mammal proteins reveals similar and idiosyncratic N-alpha acetylation features.</title>
        <authorList>
            <person name="Bienvenut W.V."/>
            <person name="Sumpton D."/>
            <person name="Martinez A."/>
            <person name="Lilla S."/>
            <person name="Espagne C."/>
            <person name="Meinnel T."/>
            <person name="Giglione C."/>
        </authorList>
    </citation>
    <scope>ACETYLATION [LARGE SCALE ANALYSIS] AT MET-1</scope>
    <scope>IDENTIFICATION BY MASS SPECTROMETRY [LARGE SCALE ANALYSIS]</scope>
</reference>
<reference key="10">
    <citation type="journal article" date="2012" name="Proc. Natl. Acad. Sci. U.S.A.">
        <title>N-terminal acetylome analyses and functional insights of the N-terminal acetyltransferase NatB.</title>
        <authorList>
            <person name="Van Damme P."/>
            <person name="Lasa M."/>
            <person name="Polevoda B."/>
            <person name="Gazquez C."/>
            <person name="Elosegui-Artola A."/>
            <person name="Kim D.S."/>
            <person name="De Juan-Pardo E."/>
            <person name="Demeyer K."/>
            <person name="Hole K."/>
            <person name="Larrea E."/>
            <person name="Timmerman E."/>
            <person name="Prieto J."/>
            <person name="Arnesen T."/>
            <person name="Sherman F."/>
            <person name="Gevaert K."/>
            <person name="Aldabe R."/>
        </authorList>
    </citation>
    <scope>ACETYLATION [LARGE SCALE ANALYSIS] AT MET-1</scope>
    <scope>IDENTIFICATION BY MASS SPECTROMETRY [LARGE SCALE ANALYSIS]</scope>
</reference>
<reference key="11">
    <citation type="journal article" date="2013" name="J. Proteome Res.">
        <title>Toward a comprehensive characterization of a human cancer cell phosphoproteome.</title>
        <authorList>
            <person name="Zhou H."/>
            <person name="Di Palma S."/>
            <person name="Preisinger C."/>
            <person name="Peng M."/>
            <person name="Polat A.N."/>
            <person name="Heck A.J."/>
            <person name="Mohammed S."/>
        </authorList>
    </citation>
    <scope>PHOSPHORYLATION [LARGE SCALE ANALYSIS] AT THR-22</scope>
    <scope>IDENTIFICATION BY MASS SPECTROMETRY [LARGE SCALE ANALYSIS]</scope>
    <source>
        <tissue>Cervix carcinoma</tissue>
        <tissue>Erythroleukemia</tissue>
    </source>
</reference>
<reference key="12">
    <citation type="journal article" date="2014" name="J. Proteomics">
        <title>An enzyme assisted RP-RPLC approach for in-depth analysis of human liver phosphoproteome.</title>
        <authorList>
            <person name="Bian Y."/>
            <person name="Song C."/>
            <person name="Cheng K."/>
            <person name="Dong M."/>
            <person name="Wang F."/>
            <person name="Huang J."/>
            <person name="Sun D."/>
            <person name="Wang L."/>
            <person name="Ye M."/>
            <person name="Zou H."/>
        </authorList>
    </citation>
    <scope>IDENTIFICATION BY MASS SPECTROMETRY [LARGE SCALE ANALYSIS]</scope>
    <source>
        <tissue>Liver</tissue>
    </source>
</reference>
<reference key="13">
    <citation type="journal article" date="2015" name="Proteomics">
        <title>N-terminome analysis of the human mitochondrial proteome.</title>
        <authorList>
            <person name="Vaca Jacome A.S."/>
            <person name="Rabilloud T."/>
            <person name="Schaeffer-Reiss C."/>
            <person name="Rompais M."/>
            <person name="Ayoub D."/>
            <person name="Lane L."/>
            <person name="Bairoch A."/>
            <person name="Van Dorsselaer A."/>
            <person name="Carapito C."/>
        </authorList>
    </citation>
    <scope>IDENTIFICATION BY MASS SPECTROMETRY [LARGE SCALE ANALYSIS]</scope>
</reference>
<reference key="14">
    <citation type="journal article" date="2000" name="Am. J. Med. Genet.">
        <title>Mutations in the NSDHL gene, encoding a 3beta-hydroxysteroid dehydrogenase, cause CHILD syndrome.</title>
        <authorList>
            <person name="Konig A."/>
            <person name="Happle R."/>
            <person name="Bornholdt D."/>
            <person name="Engel H."/>
            <person name="Grzeschik K.H."/>
        </authorList>
    </citation>
    <scope>VARIANTS CHILD VAL-105 AND SER-205</scope>
</reference>
<reference key="15">
    <citation type="journal article" date="2002" name="J. Am. Acad. Dermatol.">
        <title>A novel missense mutation of NSDHL in an unusual case of CHILD syndrome showing bilateral, almost symmetric involvement.</title>
        <authorList>
            <person name="Konig A."/>
            <person name="Happle R."/>
            <person name="Fink-Puches R."/>
            <person name="Soyer H.P."/>
            <person name="Bornholdt D."/>
            <person name="Engel H."/>
            <person name="Grzeschik K.H."/>
        </authorList>
    </citation>
    <scope>VARIANT CHILD PRO-182</scope>
</reference>
<reference key="16">
    <citation type="journal article" date="2010" name="Am. J. Hum. Genet.">
        <title>Hypomorphic temperature-sensitive alleles of NSDHL cause CK syndrome.</title>
        <authorList>
            <person name="McLarren K.W."/>
            <person name="Severson T.M."/>
            <person name="du Souich C."/>
            <person name="Stockton D.W."/>
            <person name="Kratz L.E."/>
            <person name="Cunningham D."/>
            <person name="Hendson G."/>
            <person name="Morin R.D."/>
            <person name="Wu D."/>
            <person name="Paul J.E."/>
            <person name="An J."/>
            <person name="Nelson T.N."/>
            <person name="Chou A."/>
            <person name="DeBarber A.E."/>
            <person name="Merkens L.S."/>
            <person name="Michaud J.L."/>
            <person name="Waters P.J."/>
            <person name="Yin J."/>
            <person name="McGillivray B."/>
            <person name="Demos M."/>
            <person name="Rouleau G.A."/>
            <person name="Grzeschik K.H."/>
            <person name="Smith R."/>
            <person name="Tarpey P.S."/>
            <person name="Shears D."/>
            <person name="Schwartz C.E."/>
            <person name="Gecz J."/>
            <person name="Stratton M.R."/>
            <person name="Arbour L."/>
            <person name="Hurlburt J."/>
            <person name="Van Allen M.I."/>
            <person name="Herman G.E."/>
            <person name="Zhao Y."/>
            <person name="Moore R."/>
            <person name="Kelley R.I."/>
            <person name="Jones S.J."/>
            <person name="Steiner R.D."/>
            <person name="Raymond F.L."/>
            <person name="Marra M.A."/>
            <person name="Boerkoel C.F."/>
        </authorList>
    </citation>
    <scope>VARIANT CKS LYS-232 DEL</scope>
    <scope>CHARACTERIZATION OF VARIANT CKS LYS-232 DEL</scope>
    <scope>SUBCELLULAR LOCATION</scope>
</reference>
<reference key="17">
    <citation type="journal article" date="2021" name="Cell. Mol. Life Sci.">
        <title>Crystal structures of human NSDHL and development of its novel inhibitor with the potential to suppress EGFR activity.</title>
        <authorList>
            <person name="Kim D.G."/>
            <person name="Cho S."/>
            <person name="Lee K.Y."/>
            <person name="Cheon S.H."/>
            <person name="Yoon H.J."/>
            <person name="Lee J.Y."/>
            <person name="Kim D."/>
            <person name="Shin K.S."/>
            <person name="Koh C.H."/>
            <person name="Koo J.S."/>
            <person name="Choi Y."/>
            <person name="Lee H.H."/>
            <person name="Oh Y.K."/>
            <person name="Jeong Y.S."/>
            <person name="Chung S.J."/>
            <person name="Baek M."/>
            <person name="Jung K.Y."/>
            <person name="Lim H.J."/>
            <person name="Kim H.S."/>
            <person name="Park S.J."/>
            <person name="Lee J.Y."/>
            <person name="Lee S.J."/>
            <person name="Lee B.J."/>
        </authorList>
    </citation>
    <scope>X-RAY CRYSTALLOGRAPHY (2.90 ANGSTROMS) IN COMPLEX WITH NAD</scope>
    <scope>SUBUNIT</scope>
</reference>
<name>NSDHL_HUMAN</name>
<proteinExistence type="evidence at protein level"/>
<keyword id="KW-0002">3D-structure</keyword>
<keyword id="KW-0007">Acetylation</keyword>
<keyword id="KW-0152">Cholesterol biosynthesis</keyword>
<keyword id="KW-0153">Cholesterol metabolism</keyword>
<keyword id="KW-0225">Disease variant</keyword>
<keyword id="KW-0256">Endoplasmic reticulum</keyword>
<keyword id="KW-0977">Ichthyosis</keyword>
<keyword id="KW-0991">Intellectual disability</keyword>
<keyword id="KW-0444">Lipid biosynthesis</keyword>
<keyword id="KW-0551">Lipid droplet</keyword>
<keyword id="KW-0443">Lipid metabolism</keyword>
<keyword id="KW-0472">Membrane</keyword>
<keyword id="KW-0520">NAD</keyword>
<keyword id="KW-0560">Oxidoreductase</keyword>
<keyword id="KW-0597">Phosphoprotein</keyword>
<keyword id="KW-1267">Proteomics identification</keyword>
<keyword id="KW-1185">Reference proteome</keyword>
<keyword id="KW-0752">Steroid biosynthesis</keyword>
<keyword id="KW-0753">Steroid metabolism</keyword>
<keyword id="KW-0756">Sterol biosynthesis</keyword>
<keyword id="KW-1207">Sterol metabolism</keyword>
<keyword id="KW-0812">Transmembrane</keyword>
<keyword id="KW-1133">Transmembrane helix</keyword>
<gene>
    <name type="primary">NSDHL</name>
    <name type="synonym">H105E3</name>
</gene>
<evidence type="ECO:0000250" key="1">
    <source>
        <dbReference type="UniProtKB" id="Q12068"/>
    </source>
</evidence>
<evidence type="ECO:0000250" key="2">
    <source>
        <dbReference type="UniProtKB" id="Q9R1J0"/>
    </source>
</evidence>
<evidence type="ECO:0000255" key="3"/>
<evidence type="ECO:0000269" key="4">
    <source>
    </source>
</evidence>
<evidence type="ECO:0000269" key="5">
    <source>
    </source>
</evidence>
<evidence type="ECO:0000269" key="6">
    <source>
    </source>
</evidence>
<evidence type="ECO:0000269" key="7">
    <source>
    </source>
</evidence>
<evidence type="ECO:0000305" key="8"/>
<evidence type="ECO:0007744" key="9">
    <source>
    </source>
</evidence>
<evidence type="ECO:0007744" key="10">
    <source>
    </source>
</evidence>
<evidence type="ECO:0007744" key="11">
    <source>
    </source>
</evidence>
<evidence type="ECO:0007829" key="12">
    <source>
        <dbReference type="PDB" id="6JKG"/>
    </source>
</evidence>
<evidence type="ECO:0007829" key="13">
    <source>
        <dbReference type="PDB" id="6JKH"/>
    </source>
</evidence>
<sequence>MEPAVSEPMRDQVARTHLTEDTPKVNADIEKVNQNQAKRCTVIGGSGFLGQHMVEQLLARGYAVNVFDIQQGFDNPQVRFFLGDLCSRQDLYPALKGVNTVFHCASPPPSSNNKELFYRVNYIGTKNVIETCKEAGVQKLILTSSASVIFEGVDIKNGTEDLPYAMKPIDYYTETKILQERAVLGANDPEKNFLTTAIRPHGIFGPRDPQLVPILIEAARNGKMKFVIGNGKNLVDFTFVENVVHGHILAAEQLSRDSTLGGKAFHITNDEPIPFWTFLSRILTGLNYEAPKYHIPYWVAYYLALLLSLLVMVISPVIQLQPTFTPMRVALAGTFHYYSCERAKKAMGYQPLVTMDDAMERTVQSFRHLRRVK</sequence>
<protein>
    <recommendedName>
        <fullName>Sterol-4-alpha-carboxylate 3-dehydrogenase, decarboxylating</fullName>
        <ecNumber evidence="2">1.1.1.170</ecNumber>
    </recommendedName>
    <alternativeName>
        <fullName>Protein H105e3</fullName>
    </alternativeName>
</protein>
<accession>Q15738</accession>
<accession>D3DWT6</accession>
<accession>O00344</accession>
<comment type="function">
    <text evidence="2">Catalyzes the NAD(P)(+)-dependent oxidative decarboxylation of the C4 methyl groups of 4-alpha-carboxysterols in post-squalene cholesterol biosynthesis (By similarity). Also plays a role in the regulation of the endocytic trafficking of EGFR (By similarity).</text>
</comment>
<comment type="catalytic activity">
    <reaction evidence="2">
        <text>a 3beta-hydroxysteroid-4alpha-carboxylate + NADP(+) = a 3-oxosteroid + CO2 + NADPH</text>
        <dbReference type="Rhea" id="RHEA:34771"/>
        <dbReference type="ChEBI" id="CHEBI:16526"/>
        <dbReference type="ChEBI" id="CHEBI:47788"/>
        <dbReference type="ChEBI" id="CHEBI:57783"/>
        <dbReference type="ChEBI" id="CHEBI:58349"/>
        <dbReference type="ChEBI" id="CHEBI:136966"/>
        <dbReference type="EC" id="1.1.1.170"/>
    </reaction>
</comment>
<comment type="catalytic activity">
    <reaction evidence="2">
        <text>a 3beta-hydroxysteroid-4alpha-carboxylate + NAD(+) = a 3-oxosteroid + CO2 + NADH</text>
        <dbReference type="Rhea" id="RHEA:34775"/>
        <dbReference type="ChEBI" id="CHEBI:16526"/>
        <dbReference type="ChEBI" id="CHEBI:47788"/>
        <dbReference type="ChEBI" id="CHEBI:57540"/>
        <dbReference type="ChEBI" id="CHEBI:57945"/>
        <dbReference type="ChEBI" id="CHEBI:136966"/>
        <dbReference type="EC" id="1.1.1.170"/>
    </reaction>
</comment>
<comment type="catalytic activity">
    <reaction evidence="2">
        <text>4alpha-carboxyzymosterol + NADP(+) = zymosterone + CO2 + NADPH</text>
        <dbReference type="Rhea" id="RHEA:33455"/>
        <dbReference type="ChEBI" id="CHEBI:16526"/>
        <dbReference type="ChEBI" id="CHEBI:52386"/>
        <dbReference type="ChEBI" id="CHEBI:57783"/>
        <dbReference type="ChEBI" id="CHEBI:58349"/>
        <dbReference type="ChEBI" id="CHEBI:143575"/>
    </reaction>
    <physiologicalReaction direction="left-to-right" evidence="2">
        <dbReference type="Rhea" id="RHEA:33456"/>
    </physiologicalReaction>
</comment>
<comment type="catalytic activity">
    <reaction evidence="2">
        <text>4alpha-carboxy-4beta-methyl-5alpha-cholest-8-en-3beta-ol + NADP(+) = 4alpha-methyl-5alpha-cholest-8-en-3-one + CO2 + NADPH</text>
        <dbReference type="Rhea" id="RHEA:46828"/>
        <dbReference type="ChEBI" id="CHEBI:16526"/>
        <dbReference type="ChEBI" id="CHEBI:57783"/>
        <dbReference type="ChEBI" id="CHEBI:58349"/>
        <dbReference type="ChEBI" id="CHEBI:87047"/>
        <dbReference type="ChEBI" id="CHEBI:87050"/>
    </reaction>
    <physiologicalReaction direction="left-to-right" evidence="2">
        <dbReference type="Rhea" id="RHEA:46829"/>
    </physiologicalReaction>
</comment>
<comment type="catalytic activity">
    <reaction evidence="2">
        <text>4alpha-carboxy-5alpha-cholest-8-ene-3beta-ol + NADP(+) = 5alpha-cholest-8-en-3-one + CO2 + NADPH</text>
        <dbReference type="Rhea" id="RHEA:46848"/>
        <dbReference type="ChEBI" id="CHEBI:16526"/>
        <dbReference type="ChEBI" id="CHEBI:57783"/>
        <dbReference type="ChEBI" id="CHEBI:58349"/>
        <dbReference type="ChEBI" id="CHEBI:87055"/>
        <dbReference type="ChEBI" id="CHEBI:87056"/>
    </reaction>
    <physiologicalReaction direction="left-to-right" evidence="2">
        <dbReference type="Rhea" id="RHEA:46849"/>
    </physiologicalReaction>
</comment>
<comment type="catalytic activity">
    <reaction evidence="2">
        <text>4beta-methylzymosterol-4alpha-carboxylate + NADP(+) = 3-dehydro-4-methylzymosterol + CO2 + NADPH</text>
        <dbReference type="Rhea" id="RHEA:33447"/>
        <dbReference type="ChEBI" id="CHEBI:16526"/>
        <dbReference type="ChEBI" id="CHEBI:50593"/>
        <dbReference type="ChEBI" id="CHEBI:57783"/>
        <dbReference type="ChEBI" id="CHEBI:58349"/>
        <dbReference type="ChEBI" id="CHEBI:64925"/>
        <dbReference type="EC" id="1.1.1.170"/>
    </reaction>
    <physiologicalReaction direction="left-to-right" evidence="2">
        <dbReference type="Rhea" id="RHEA:33448"/>
    </physiologicalReaction>
</comment>
<comment type="catalytic activity">
    <reaction evidence="2">
        <text>4beta-methylzymosterol-4alpha-carboxylate + NAD(+) = 3-dehydro-4-methylzymosterol + CO2 + NADH</text>
        <dbReference type="Rhea" id="RHEA:47160"/>
        <dbReference type="ChEBI" id="CHEBI:16526"/>
        <dbReference type="ChEBI" id="CHEBI:50593"/>
        <dbReference type="ChEBI" id="CHEBI:57540"/>
        <dbReference type="ChEBI" id="CHEBI:57945"/>
        <dbReference type="ChEBI" id="CHEBI:64925"/>
    </reaction>
    <physiologicalReaction direction="left-to-right" evidence="2">
        <dbReference type="Rhea" id="RHEA:47161"/>
    </physiologicalReaction>
</comment>
<comment type="catalytic activity">
    <reaction evidence="2">
        <text>4alpha-carboxy-5alpha-cholest-8-ene-3beta-ol + NAD(+) = 5alpha-cholest-8-en-3-one + CO2 + NADH</text>
        <dbReference type="Rhea" id="RHEA:47172"/>
        <dbReference type="ChEBI" id="CHEBI:16526"/>
        <dbReference type="ChEBI" id="CHEBI:57540"/>
        <dbReference type="ChEBI" id="CHEBI:57945"/>
        <dbReference type="ChEBI" id="CHEBI:87055"/>
        <dbReference type="ChEBI" id="CHEBI:87056"/>
    </reaction>
    <physiologicalReaction direction="left-to-right" evidence="2">
        <dbReference type="Rhea" id="RHEA:47173"/>
    </physiologicalReaction>
</comment>
<comment type="catalytic activity">
    <reaction evidence="2">
        <text>4alpha-carboxy-4beta-methyl-5alpha-cholest-8-en-3beta-ol + NAD(+) = 4alpha-methyl-5alpha-cholest-8-en-3-one + CO2 + NADH</text>
        <dbReference type="Rhea" id="RHEA:47168"/>
        <dbReference type="ChEBI" id="CHEBI:16526"/>
        <dbReference type="ChEBI" id="CHEBI:57540"/>
        <dbReference type="ChEBI" id="CHEBI:57945"/>
        <dbReference type="ChEBI" id="CHEBI:87047"/>
        <dbReference type="ChEBI" id="CHEBI:87050"/>
    </reaction>
    <physiologicalReaction direction="left-to-right" evidence="2">
        <dbReference type="Rhea" id="RHEA:47169"/>
    </physiologicalReaction>
</comment>
<comment type="catalytic activity">
    <reaction evidence="2">
        <text>4alpha-carboxyzymosterol + NAD(+) = zymosterone + CO2 + NADH</text>
        <dbReference type="Rhea" id="RHEA:47164"/>
        <dbReference type="ChEBI" id="CHEBI:16526"/>
        <dbReference type="ChEBI" id="CHEBI:52386"/>
        <dbReference type="ChEBI" id="CHEBI:57540"/>
        <dbReference type="ChEBI" id="CHEBI:57945"/>
        <dbReference type="ChEBI" id="CHEBI:143575"/>
    </reaction>
    <physiologicalReaction direction="left-to-right" evidence="2">
        <dbReference type="Rhea" id="RHEA:47165"/>
    </physiologicalReaction>
</comment>
<comment type="biophysicochemical properties">
    <kinetics>
        <KM evidence="7">21.4 uM for NADH</KM>
        <KM evidence="7">151.5 uM for NADP(+)</KM>
    </kinetics>
</comment>
<comment type="pathway">
    <text>Steroid biosynthesis; zymosterol biosynthesis; zymosterol from lanosterol: step 4/6.</text>
</comment>
<comment type="subunit">
    <text evidence="7">Homodimer.</text>
</comment>
<comment type="interaction">
    <interactant intactId="EBI-4280135">
        <id>Q15738</id>
    </interactant>
    <interactant intactId="EBI-930964">
        <id>P54253</id>
        <label>ATXN1</label>
    </interactant>
    <organismsDiffer>false</organismsDiffer>
    <experiments>3</experiments>
</comment>
<comment type="interaction">
    <interactant intactId="EBI-4280135">
        <id>Q15738</id>
    </interactant>
    <interactant intactId="EBI-9916444">
        <id>Q8TEB9</id>
        <label>RHBDD1</label>
    </interactant>
    <organismsDiffer>false</organismsDiffer>
    <experiments>3</experiments>
</comment>
<comment type="interaction">
    <interactant intactId="EBI-4280135">
        <id>Q15738</id>
    </interactant>
    <interactant intactId="EBI-6447886">
        <id>Q9Y320</id>
        <label>TMX2</label>
    </interactant>
    <organismsDiffer>false</organismsDiffer>
    <experiments>3</experiments>
</comment>
<comment type="subcellular location">
    <subcellularLocation>
        <location evidence="6">Endoplasmic reticulum membrane</location>
        <topology evidence="3">Single-pass membrane protein</topology>
    </subcellularLocation>
    <subcellularLocation>
        <location evidence="2">Lipid droplet</location>
    </subcellularLocation>
    <text evidence="2">Trafficking through the Golgi is necessary for ER membrane localization.</text>
</comment>
<comment type="tissue specificity">
    <text>Brain, heart, liver, lung, kidney, skin and placenta.</text>
</comment>
<comment type="disease" evidence="4 5">
    <disease id="DI-00357">
        <name>Congenital hemidysplasia with ichthyosiform erythroderma and limb defects</name>
        <acronym>CHILD</acronym>
        <description>An X-linked dominant disorder of lipid metabolism with disturbed cholesterol biosynthesis, which typically results in male lethality. Clinically, it is characterized by congenital, unilateral, ichthyosisform erythroderma with striking lateralization, sharp midline demarcation, and ipsilateral limb defects and hypoplasia of the body. Limbs defects range from hypoplasia of digits or ribs to complete amelia, often including scoliosis.</description>
        <dbReference type="MIM" id="308050"/>
    </disease>
    <text>The disease is caused by variants affecting the gene represented in this entry.</text>
</comment>
<comment type="disease" evidence="6">
    <disease id="DI-03007">
        <name>CK syndrome</name>
        <acronym>CKS</acronym>
        <description>An X-linked recessive disorder characterized by mild to severe cognitive impairment, seizures, microcephaly, cerebral cortical malformations, dysmorphic facial features, and thin body habitus.</description>
        <dbReference type="MIM" id="300831"/>
    </disease>
    <text>The disease is caused by variants affecting the gene represented in this entry.</text>
</comment>
<comment type="similarity">
    <text evidence="8">Belongs to the 3-beta-HSD family.</text>
</comment>
<dbReference type="EC" id="1.1.1.170" evidence="2"/>
<dbReference type="EMBL" id="U47105">
    <property type="protein sequence ID" value="AAC50558.2"/>
    <property type="molecule type" value="mRNA"/>
</dbReference>
<dbReference type="EMBL" id="U82671">
    <property type="status" value="NOT_ANNOTATED_CDS"/>
    <property type="molecule type" value="Genomic_DNA"/>
</dbReference>
<dbReference type="EMBL" id="CH471172">
    <property type="protein sequence ID" value="EAW72898.1"/>
    <property type="molecule type" value="Genomic_DNA"/>
</dbReference>
<dbReference type="EMBL" id="CH471172">
    <property type="protein sequence ID" value="EAW72899.1"/>
    <property type="molecule type" value="Genomic_DNA"/>
</dbReference>
<dbReference type="EMBL" id="BC000245">
    <property type="protein sequence ID" value="AAH00245.1"/>
    <property type="molecule type" value="mRNA"/>
</dbReference>
<dbReference type="EMBL" id="BC007816">
    <property type="protein sequence ID" value="AAH07816.1"/>
    <property type="molecule type" value="mRNA"/>
</dbReference>
<dbReference type="CCDS" id="CCDS14717.1"/>
<dbReference type="RefSeq" id="NP_001123237.1">
    <property type="nucleotide sequence ID" value="NM_001129765.2"/>
</dbReference>
<dbReference type="RefSeq" id="NP_057006.1">
    <property type="nucleotide sequence ID" value="NM_015922.3"/>
</dbReference>
<dbReference type="RefSeq" id="XP_011529480.1">
    <property type="nucleotide sequence ID" value="XM_011531178.3"/>
</dbReference>
<dbReference type="RefSeq" id="XP_054183139.1">
    <property type="nucleotide sequence ID" value="XM_054327164.1"/>
</dbReference>
<dbReference type="RefSeq" id="XP_054189320.1">
    <property type="nucleotide sequence ID" value="XM_054333345.1"/>
</dbReference>
<dbReference type="PDB" id="6JKG">
    <property type="method" value="X-ray"/>
    <property type="resolution" value="2.90 A"/>
    <property type="chains" value="A/B=31-267"/>
</dbReference>
<dbReference type="PDB" id="6JKH">
    <property type="method" value="X-ray"/>
    <property type="resolution" value="3.00 A"/>
    <property type="chains" value="A/B=31-267"/>
</dbReference>
<dbReference type="PDBsum" id="6JKG"/>
<dbReference type="PDBsum" id="6JKH"/>
<dbReference type="SMR" id="Q15738"/>
<dbReference type="BioGRID" id="119131">
    <property type="interactions" value="176"/>
</dbReference>
<dbReference type="FunCoup" id="Q15738">
    <property type="interactions" value="557"/>
</dbReference>
<dbReference type="IntAct" id="Q15738">
    <property type="interactions" value="65"/>
</dbReference>
<dbReference type="MINT" id="Q15738"/>
<dbReference type="STRING" id="9606.ENSP00000359297"/>
<dbReference type="DrugBank" id="DB00157">
    <property type="generic name" value="NADH"/>
</dbReference>
<dbReference type="GuidetoPHARMACOLOGY" id="3297"/>
<dbReference type="GlyGen" id="Q15738">
    <property type="glycosylation" value="1 site, 1 O-linked glycan (1 site)"/>
</dbReference>
<dbReference type="iPTMnet" id="Q15738"/>
<dbReference type="PhosphoSitePlus" id="Q15738"/>
<dbReference type="SwissPalm" id="Q15738"/>
<dbReference type="BioMuta" id="NSDHL"/>
<dbReference type="DMDM" id="8488997"/>
<dbReference type="REPRODUCTION-2DPAGE" id="Q15738"/>
<dbReference type="jPOST" id="Q15738"/>
<dbReference type="MassIVE" id="Q15738"/>
<dbReference type="PaxDb" id="9606-ENSP00000359297"/>
<dbReference type="PeptideAtlas" id="Q15738"/>
<dbReference type="ProteomicsDB" id="60727"/>
<dbReference type="Pumba" id="Q15738"/>
<dbReference type="Antibodypedia" id="349">
    <property type="antibodies" value="141 antibodies from 25 providers"/>
</dbReference>
<dbReference type="DNASU" id="50814"/>
<dbReference type="Ensembl" id="ENST00000370274.8">
    <property type="protein sequence ID" value="ENSP00000359297.3"/>
    <property type="gene ID" value="ENSG00000147383.11"/>
</dbReference>
<dbReference type="Ensembl" id="ENST00000440023.5">
    <property type="protein sequence ID" value="ENSP00000391854.1"/>
    <property type="gene ID" value="ENSG00000147383.11"/>
</dbReference>
<dbReference type="Ensembl" id="ENST00000709998.1">
    <property type="protein sequence ID" value="ENSP00000517980.1"/>
    <property type="gene ID" value="ENSG00000292192.1"/>
</dbReference>
<dbReference type="Ensembl" id="ENST00000710000.1">
    <property type="protein sequence ID" value="ENSP00000517982.1"/>
    <property type="gene ID" value="ENSG00000292192.1"/>
</dbReference>
<dbReference type="GeneID" id="50814"/>
<dbReference type="KEGG" id="hsa:50814"/>
<dbReference type="MANE-Select" id="ENST00000370274.8">
    <property type="protein sequence ID" value="ENSP00000359297.3"/>
    <property type="RefSeq nucleotide sequence ID" value="NM_015922.3"/>
    <property type="RefSeq protein sequence ID" value="NP_057006.1"/>
</dbReference>
<dbReference type="UCSC" id="uc004fgs.2">
    <property type="organism name" value="human"/>
</dbReference>
<dbReference type="AGR" id="HGNC:13398"/>
<dbReference type="CTD" id="50814"/>
<dbReference type="DisGeNET" id="50814"/>
<dbReference type="GeneCards" id="NSDHL"/>
<dbReference type="GeneReviews" id="NSDHL"/>
<dbReference type="HGNC" id="HGNC:13398">
    <property type="gene designation" value="NSDHL"/>
</dbReference>
<dbReference type="HPA" id="ENSG00000147383">
    <property type="expression patterns" value="Low tissue specificity"/>
</dbReference>
<dbReference type="MalaCards" id="NSDHL"/>
<dbReference type="MIM" id="300275">
    <property type="type" value="gene"/>
</dbReference>
<dbReference type="MIM" id="300831">
    <property type="type" value="phenotype"/>
</dbReference>
<dbReference type="MIM" id="308050">
    <property type="type" value="phenotype"/>
</dbReference>
<dbReference type="neXtProt" id="NX_Q15738"/>
<dbReference type="OpenTargets" id="ENSG00000147383"/>
<dbReference type="Orphanet" id="139">
    <property type="disease" value="CHILD syndrome"/>
</dbReference>
<dbReference type="Orphanet" id="251383">
    <property type="disease" value="CK syndrome"/>
</dbReference>
<dbReference type="PharmGKB" id="PA134959020"/>
<dbReference type="VEuPathDB" id="HostDB:ENSG00000147383"/>
<dbReference type="eggNOG" id="KOG1430">
    <property type="taxonomic scope" value="Eukaryota"/>
</dbReference>
<dbReference type="GeneTree" id="ENSGT00940000158229"/>
<dbReference type="InParanoid" id="Q15738"/>
<dbReference type="OMA" id="STAHWFD"/>
<dbReference type="OrthoDB" id="10262413at2759"/>
<dbReference type="PAN-GO" id="Q15738">
    <property type="GO annotations" value="3 GO annotations based on evolutionary models"/>
</dbReference>
<dbReference type="PhylomeDB" id="Q15738"/>
<dbReference type="TreeFam" id="TF354279"/>
<dbReference type="BioCyc" id="MetaCyc:HS07423-MONOMER"/>
<dbReference type="BRENDA" id="1.1.1.170">
    <property type="organism ID" value="2681"/>
</dbReference>
<dbReference type="PathwayCommons" id="Q15738"/>
<dbReference type="Reactome" id="R-HSA-191273">
    <property type="pathway name" value="Cholesterol biosynthesis"/>
</dbReference>
<dbReference type="SABIO-RK" id="Q15738"/>
<dbReference type="SignaLink" id="Q15738"/>
<dbReference type="UniPathway" id="UPA00770">
    <property type="reaction ID" value="UER00757"/>
</dbReference>
<dbReference type="BioGRID-ORCS" id="50814">
    <property type="hits" value="18 hits in 782 CRISPR screens"/>
</dbReference>
<dbReference type="GeneWiki" id="NSDHL"/>
<dbReference type="GenomeRNAi" id="50814"/>
<dbReference type="Pharos" id="Q15738">
    <property type="development level" value="Tbio"/>
</dbReference>
<dbReference type="PRO" id="PR:Q15738"/>
<dbReference type="Proteomes" id="UP000005640">
    <property type="component" value="Chromosome X"/>
</dbReference>
<dbReference type="RNAct" id="Q15738">
    <property type="molecule type" value="protein"/>
</dbReference>
<dbReference type="Bgee" id="ENSG00000147383">
    <property type="expression patterns" value="Expressed in cervix squamous epithelium and 185 other cell types or tissues"/>
</dbReference>
<dbReference type="ExpressionAtlas" id="Q15738">
    <property type="expression patterns" value="baseline and differential"/>
</dbReference>
<dbReference type="GO" id="GO:0005783">
    <property type="term" value="C:endoplasmic reticulum"/>
    <property type="evidence" value="ECO:0000314"/>
    <property type="project" value="LIFEdb"/>
</dbReference>
<dbReference type="GO" id="GO:0005789">
    <property type="term" value="C:endoplasmic reticulum membrane"/>
    <property type="evidence" value="ECO:0000304"/>
    <property type="project" value="Reactome"/>
</dbReference>
<dbReference type="GO" id="GO:0005811">
    <property type="term" value="C:lipid droplet"/>
    <property type="evidence" value="ECO:0000314"/>
    <property type="project" value="UniProtKB"/>
</dbReference>
<dbReference type="GO" id="GO:0003854">
    <property type="term" value="F:3-beta-hydroxy-Delta5-steroid dehydrogenase (NAD+) activity"/>
    <property type="evidence" value="ECO:0000304"/>
    <property type="project" value="ProtInc"/>
</dbReference>
<dbReference type="GO" id="GO:0102175">
    <property type="term" value="F:3-beta-hydroxysteroid dehydrogenase (NAD+)/C4-decarboxylase activity"/>
    <property type="evidence" value="ECO:0007669"/>
    <property type="project" value="RHEA"/>
</dbReference>
<dbReference type="GO" id="GO:0000252">
    <property type="term" value="F:3-beta-hydroxysteroid dehydrogenase [NAD(P)+]/C4-decarboxylase activity"/>
    <property type="evidence" value="ECO:0000304"/>
    <property type="project" value="Reactome"/>
</dbReference>
<dbReference type="GO" id="GO:0016616">
    <property type="term" value="F:oxidoreductase activity, acting on the CH-OH group of donors, NAD or NADP as acceptor"/>
    <property type="evidence" value="ECO:0000318"/>
    <property type="project" value="GO_Central"/>
</dbReference>
<dbReference type="GO" id="GO:0006695">
    <property type="term" value="P:cholesterol biosynthetic process"/>
    <property type="evidence" value="ECO:0000304"/>
    <property type="project" value="Reactome"/>
</dbReference>
<dbReference type="GO" id="GO:0008203">
    <property type="term" value="P:cholesterol metabolic process"/>
    <property type="evidence" value="ECO:0000318"/>
    <property type="project" value="GO_Central"/>
</dbReference>
<dbReference type="GO" id="GO:0001942">
    <property type="term" value="P:hair follicle development"/>
    <property type="evidence" value="ECO:0007669"/>
    <property type="project" value="Ensembl"/>
</dbReference>
<dbReference type="GO" id="GO:0060716">
    <property type="term" value="P:labyrinthine layer blood vessel development"/>
    <property type="evidence" value="ECO:0007669"/>
    <property type="project" value="Ensembl"/>
</dbReference>
<dbReference type="GO" id="GO:0007224">
    <property type="term" value="P:smoothened signaling pathway"/>
    <property type="evidence" value="ECO:0007669"/>
    <property type="project" value="Ensembl"/>
</dbReference>
<dbReference type="CDD" id="cd09813">
    <property type="entry name" value="3b-HSD-NSDHL-like_SDR_e"/>
    <property type="match status" value="1"/>
</dbReference>
<dbReference type="FunFam" id="3.40.50.720:FF:000251">
    <property type="entry name" value="Sterol-4-alpha-carboxylate 3-dehydrogenase, decarboxylating"/>
    <property type="match status" value="1"/>
</dbReference>
<dbReference type="Gene3D" id="3.40.50.720">
    <property type="entry name" value="NAD(P)-binding Rossmann-like Domain"/>
    <property type="match status" value="1"/>
</dbReference>
<dbReference type="InterPro" id="IPR002225">
    <property type="entry name" value="3Beta_OHSteriod_DH/Estase"/>
</dbReference>
<dbReference type="InterPro" id="IPR050177">
    <property type="entry name" value="Lipid_A_modif_metabolic_enz"/>
</dbReference>
<dbReference type="InterPro" id="IPR036291">
    <property type="entry name" value="NAD(P)-bd_dom_sf"/>
</dbReference>
<dbReference type="PANTHER" id="PTHR43245">
    <property type="entry name" value="BIFUNCTIONAL POLYMYXIN RESISTANCE PROTEIN ARNA"/>
    <property type="match status" value="1"/>
</dbReference>
<dbReference type="PANTHER" id="PTHR43245:SF51">
    <property type="entry name" value="SHORT CHAIN DEHYDROGENASE_REDUCTASE FAMILY 42E, MEMBER 2"/>
    <property type="match status" value="1"/>
</dbReference>
<dbReference type="Pfam" id="PF01073">
    <property type="entry name" value="3Beta_HSD"/>
    <property type="match status" value="1"/>
</dbReference>
<dbReference type="SUPFAM" id="SSF51735">
    <property type="entry name" value="NAD(P)-binding Rossmann-fold domains"/>
    <property type="match status" value="1"/>
</dbReference>
<organism>
    <name type="scientific">Homo sapiens</name>
    <name type="common">Human</name>
    <dbReference type="NCBI Taxonomy" id="9606"/>
    <lineage>
        <taxon>Eukaryota</taxon>
        <taxon>Metazoa</taxon>
        <taxon>Chordata</taxon>
        <taxon>Craniata</taxon>
        <taxon>Vertebrata</taxon>
        <taxon>Euteleostomi</taxon>
        <taxon>Mammalia</taxon>
        <taxon>Eutheria</taxon>
        <taxon>Euarchontoglires</taxon>
        <taxon>Primates</taxon>
        <taxon>Haplorrhini</taxon>
        <taxon>Catarrhini</taxon>
        <taxon>Hominidae</taxon>
        <taxon>Homo</taxon>
    </lineage>
</organism>
<feature type="chain" id="PRO_0000087799" description="Sterol-4-alpha-carboxylate 3-dehydrogenase, decarboxylating">
    <location>
        <begin position="1"/>
        <end position="373"/>
    </location>
</feature>
<feature type="transmembrane region" description="Helical" evidence="3">
    <location>
        <begin position="298"/>
        <end position="318"/>
    </location>
</feature>
<feature type="short sequence motif" description="Prevents secretion from ER" evidence="2">
    <location>
        <begin position="370"/>
        <end position="373"/>
    </location>
</feature>
<feature type="active site" description="Proton acceptor" evidence="1">
    <location>
        <position position="172"/>
    </location>
</feature>
<feature type="binding site" evidence="1">
    <location>
        <position position="176"/>
    </location>
    <ligand>
        <name>NAD(+)</name>
        <dbReference type="ChEBI" id="CHEBI:57540"/>
    </ligand>
</feature>
<feature type="modified residue" description="N-acetylmethionine" evidence="9 10">
    <location>
        <position position="1"/>
    </location>
</feature>
<feature type="modified residue" description="Phosphothreonine" evidence="11">
    <location>
        <position position="22"/>
    </location>
</feature>
<feature type="sequence variant" id="VAR_010207" description="In CHILD; dbSNP:rs104894909." evidence="4">
    <original>A</original>
    <variation>V</variation>
    <location>
        <position position="105"/>
    </location>
</feature>
<feature type="sequence variant" id="VAR_065289" description="In CHILD; dbSNP:rs104894904." evidence="5">
    <original>A</original>
    <variation>P</variation>
    <location>
        <position position="182"/>
    </location>
</feature>
<feature type="sequence variant" id="VAR_010208" description="In CHILD; dbSNP:rs104894901." evidence="4">
    <original>G</original>
    <variation>S</variation>
    <location>
        <position position="205"/>
    </location>
</feature>
<feature type="sequence variant" id="VAR_065290" description="In CKS; temperature-sensitive hypomorphic mutation; able to correctly fold and complement Erg26 mutant yeast at 30 degrees Celsius; Abolishes ability to complement Erg26 mutant yeast at 37 degrees Celsius due to abnormal folding and protein degradation." evidence="6">
    <location>
        <position position="232"/>
    </location>
</feature>
<feature type="strand" evidence="12">
    <location>
        <begin position="38"/>
        <end position="43"/>
    </location>
</feature>
<feature type="turn" evidence="12">
    <location>
        <begin position="44"/>
        <end position="46"/>
    </location>
</feature>
<feature type="helix" evidence="12">
    <location>
        <begin position="48"/>
        <end position="59"/>
    </location>
</feature>
<feature type="strand" evidence="12">
    <location>
        <begin position="63"/>
        <end position="67"/>
    </location>
</feature>
<feature type="strand" evidence="13">
    <location>
        <begin position="78"/>
        <end position="82"/>
    </location>
</feature>
<feature type="helix" evidence="12">
    <location>
        <begin position="88"/>
        <end position="95"/>
    </location>
</feature>
<feature type="strand" evidence="12">
    <location>
        <begin position="99"/>
        <end position="103"/>
    </location>
</feature>
<feature type="helix" evidence="13">
    <location>
        <begin position="109"/>
        <end position="111"/>
    </location>
</feature>
<feature type="helix" evidence="12">
    <location>
        <begin position="114"/>
        <end position="121"/>
    </location>
</feature>
<feature type="helix" evidence="12">
    <location>
        <begin position="123"/>
        <end position="134"/>
    </location>
</feature>
<feature type="strand" evidence="12">
    <location>
        <begin position="139"/>
        <end position="143"/>
    </location>
</feature>
<feature type="helix" evidence="12">
    <location>
        <begin position="146"/>
        <end position="149"/>
    </location>
</feature>
<feature type="helix" evidence="12">
    <location>
        <begin position="171"/>
        <end position="185"/>
    </location>
</feature>
<feature type="turn" evidence="12">
    <location>
        <begin position="189"/>
        <end position="192"/>
    </location>
</feature>
<feature type="strand" evidence="12">
    <location>
        <begin position="193"/>
        <end position="199"/>
    </location>
</feature>
<feature type="strand" evidence="12">
    <location>
        <begin position="212"/>
        <end position="217"/>
    </location>
</feature>
<feature type="strand" evidence="12">
    <location>
        <begin position="220"/>
        <end position="223"/>
    </location>
</feature>
<feature type="strand" evidence="12">
    <location>
        <begin position="226"/>
        <end position="229"/>
    </location>
</feature>
<feature type="turn" evidence="12">
    <location>
        <begin position="231"/>
        <end position="234"/>
    </location>
</feature>
<feature type="strand" evidence="12">
    <location>
        <begin position="235"/>
        <end position="237"/>
    </location>
</feature>
<feature type="helix" evidence="12">
    <location>
        <begin position="239"/>
        <end position="256"/>
    </location>
</feature>
<feature type="helix" evidence="12">
    <location>
        <begin position="258"/>
        <end position="260"/>
    </location>
</feature>
<feature type="strand" evidence="12">
    <location>
        <begin position="263"/>
        <end position="267"/>
    </location>
</feature>